<keyword id="KW-0028">Amino-acid biosynthesis</keyword>
<keyword id="KW-0067">ATP-binding</keyword>
<keyword id="KW-0963">Cytoplasm</keyword>
<keyword id="KW-0368">Histidine biosynthesis</keyword>
<keyword id="KW-0378">Hydrolase</keyword>
<keyword id="KW-0547">Nucleotide-binding</keyword>
<keyword id="KW-1185">Reference proteome</keyword>
<reference key="1">
    <citation type="journal article" date="2003" name="Proc. Natl. Acad. Sci. U.S.A.">
        <title>The complete genome sequence of the Arabidopsis and tomato pathogen Pseudomonas syringae pv. tomato DC3000.</title>
        <authorList>
            <person name="Buell C.R."/>
            <person name="Joardar V."/>
            <person name="Lindeberg M."/>
            <person name="Selengut J."/>
            <person name="Paulsen I.T."/>
            <person name="Gwinn M.L."/>
            <person name="Dodson R.J."/>
            <person name="DeBoy R.T."/>
            <person name="Durkin A.S."/>
            <person name="Kolonay J.F."/>
            <person name="Madupu R."/>
            <person name="Daugherty S.C."/>
            <person name="Brinkac L.M."/>
            <person name="Beanan M.J."/>
            <person name="Haft D.H."/>
            <person name="Nelson W.C."/>
            <person name="Davidsen T.M."/>
            <person name="Zafar N."/>
            <person name="Zhou L."/>
            <person name="Liu J."/>
            <person name="Yuan Q."/>
            <person name="Khouri H.M."/>
            <person name="Fedorova N.B."/>
            <person name="Tran B."/>
            <person name="Russell D."/>
            <person name="Berry K.J."/>
            <person name="Utterback T.R."/>
            <person name="Van Aken S.E."/>
            <person name="Feldblyum T.V."/>
            <person name="D'Ascenzo M."/>
            <person name="Deng W.-L."/>
            <person name="Ramos A.R."/>
            <person name="Alfano J.R."/>
            <person name="Cartinhour S."/>
            <person name="Chatterjee A.K."/>
            <person name="Delaney T.P."/>
            <person name="Lazarowitz S.G."/>
            <person name="Martin G.B."/>
            <person name="Schneider D.J."/>
            <person name="Tang X."/>
            <person name="Bender C.L."/>
            <person name="White O."/>
            <person name="Fraser C.M."/>
            <person name="Collmer A."/>
        </authorList>
    </citation>
    <scope>NUCLEOTIDE SEQUENCE [LARGE SCALE GENOMIC DNA]</scope>
    <source>
        <strain>ATCC BAA-871 / DC3000</strain>
    </source>
</reference>
<accession>Q87UY8</accession>
<evidence type="ECO:0000255" key="1">
    <source>
        <dbReference type="HAMAP-Rule" id="MF_01020"/>
    </source>
</evidence>
<sequence>MTDTLSRLAEVLESRKDAAADSSYVASLYHKGLNKILEKLGEESIETIIAAKDAAVSGDCSDVIYETADLWFHSMVMLAALGQHPQAVLDELDRRFGLSGHTEKAARTAE</sequence>
<comment type="catalytic activity">
    <reaction evidence="1">
        <text>1-(5-phospho-beta-D-ribosyl)-ATP + H2O = 1-(5-phospho-beta-D-ribosyl)-5'-AMP + diphosphate + H(+)</text>
        <dbReference type="Rhea" id="RHEA:22828"/>
        <dbReference type="ChEBI" id="CHEBI:15377"/>
        <dbReference type="ChEBI" id="CHEBI:15378"/>
        <dbReference type="ChEBI" id="CHEBI:33019"/>
        <dbReference type="ChEBI" id="CHEBI:59457"/>
        <dbReference type="ChEBI" id="CHEBI:73183"/>
        <dbReference type="EC" id="3.6.1.31"/>
    </reaction>
</comment>
<comment type="pathway">
    <text evidence="1">Amino-acid biosynthesis; L-histidine biosynthesis; L-histidine from 5-phospho-alpha-D-ribose 1-diphosphate: step 2/9.</text>
</comment>
<comment type="subcellular location">
    <subcellularLocation>
        <location evidence="1">Cytoplasm</location>
    </subcellularLocation>
</comment>
<comment type="similarity">
    <text evidence="1">Belongs to the PRA-PH family.</text>
</comment>
<name>HIS2_PSESM</name>
<proteinExistence type="inferred from homology"/>
<feature type="chain" id="PRO_0000136378" description="Phosphoribosyl-ATP pyrophosphatase">
    <location>
        <begin position="1"/>
        <end position="110"/>
    </location>
</feature>
<organism>
    <name type="scientific">Pseudomonas syringae pv. tomato (strain ATCC BAA-871 / DC3000)</name>
    <dbReference type="NCBI Taxonomy" id="223283"/>
    <lineage>
        <taxon>Bacteria</taxon>
        <taxon>Pseudomonadati</taxon>
        <taxon>Pseudomonadota</taxon>
        <taxon>Gammaproteobacteria</taxon>
        <taxon>Pseudomonadales</taxon>
        <taxon>Pseudomonadaceae</taxon>
        <taxon>Pseudomonas</taxon>
    </lineage>
</organism>
<gene>
    <name evidence="1" type="primary">hisE</name>
    <name type="ordered locus">PSPTO_5154</name>
</gene>
<protein>
    <recommendedName>
        <fullName evidence="1">Phosphoribosyl-ATP pyrophosphatase</fullName>
        <shortName evidence="1">PRA-PH</shortName>
        <ecNumber evidence="1">3.6.1.31</ecNumber>
    </recommendedName>
</protein>
<dbReference type="EC" id="3.6.1.31" evidence="1"/>
<dbReference type="EMBL" id="AE016853">
    <property type="protein sequence ID" value="AAO58580.1"/>
    <property type="molecule type" value="Genomic_DNA"/>
</dbReference>
<dbReference type="RefSeq" id="NP_794885.1">
    <property type="nucleotide sequence ID" value="NC_004578.1"/>
</dbReference>
<dbReference type="RefSeq" id="WP_011105340.1">
    <property type="nucleotide sequence ID" value="NC_004578.1"/>
</dbReference>
<dbReference type="SMR" id="Q87UY8"/>
<dbReference type="STRING" id="223283.PSPTO_5154"/>
<dbReference type="GeneID" id="1186839"/>
<dbReference type="KEGG" id="pst:PSPTO_5154"/>
<dbReference type="PATRIC" id="fig|223283.9.peg.5275"/>
<dbReference type="eggNOG" id="COG0140">
    <property type="taxonomic scope" value="Bacteria"/>
</dbReference>
<dbReference type="HOGENOM" id="CLU_123337_1_2_6"/>
<dbReference type="OrthoDB" id="9814738at2"/>
<dbReference type="PhylomeDB" id="Q87UY8"/>
<dbReference type="UniPathway" id="UPA00031">
    <property type="reaction ID" value="UER00007"/>
</dbReference>
<dbReference type="Proteomes" id="UP000002515">
    <property type="component" value="Chromosome"/>
</dbReference>
<dbReference type="GO" id="GO:0005737">
    <property type="term" value="C:cytoplasm"/>
    <property type="evidence" value="ECO:0007669"/>
    <property type="project" value="UniProtKB-SubCell"/>
</dbReference>
<dbReference type="GO" id="GO:0005524">
    <property type="term" value="F:ATP binding"/>
    <property type="evidence" value="ECO:0007669"/>
    <property type="project" value="UniProtKB-KW"/>
</dbReference>
<dbReference type="GO" id="GO:0004636">
    <property type="term" value="F:phosphoribosyl-ATP diphosphatase activity"/>
    <property type="evidence" value="ECO:0007669"/>
    <property type="project" value="UniProtKB-UniRule"/>
</dbReference>
<dbReference type="GO" id="GO:0000105">
    <property type="term" value="P:L-histidine biosynthetic process"/>
    <property type="evidence" value="ECO:0007669"/>
    <property type="project" value="UniProtKB-UniRule"/>
</dbReference>
<dbReference type="CDD" id="cd11534">
    <property type="entry name" value="NTP-PPase_HisIE_like"/>
    <property type="match status" value="1"/>
</dbReference>
<dbReference type="Gene3D" id="1.10.287.1080">
    <property type="entry name" value="MazG-like"/>
    <property type="match status" value="1"/>
</dbReference>
<dbReference type="HAMAP" id="MF_01020">
    <property type="entry name" value="HisE"/>
    <property type="match status" value="1"/>
</dbReference>
<dbReference type="InterPro" id="IPR008179">
    <property type="entry name" value="HisE"/>
</dbReference>
<dbReference type="InterPro" id="IPR021130">
    <property type="entry name" value="PRib-ATP_PPHydrolase-like"/>
</dbReference>
<dbReference type="NCBIfam" id="TIGR03188">
    <property type="entry name" value="histidine_hisI"/>
    <property type="match status" value="1"/>
</dbReference>
<dbReference type="NCBIfam" id="NF001611">
    <property type="entry name" value="PRK00400.1-3"/>
    <property type="match status" value="1"/>
</dbReference>
<dbReference type="PANTHER" id="PTHR42945">
    <property type="entry name" value="HISTIDINE BIOSYNTHESIS BIFUNCTIONAL PROTEIN"/>
    <property type="match status" value="1"/>
</dbReference>
<dbReference type="PANTHER" id="PTHR42945:SF9">
    <property type="entry name" value="HISTIDINE BIOSYNTHESIS BIFUNCTIONAL PROTEIN HISIE"/>
    <property type="match status" value="1"/>
</dbReference>
<dbReference type="Pfam" id="PF01503">
    <property type="entry name" value="PRA-PH"/>
    <property type="match status" value="1"/>
</dbReference>
<dbReference type="SUPFAM" id="SSF101386">
    <property type="entry name" value="all-alpha NTP pyrophosphatases"/>
    <property type="match status" value="1"/>
</dbReference>